<reference key="1">
    <citation type="submission" date="2007-12" db="EMBL/GenBank/DDBJ databases">
        <title>Brucella suis ATCC 23445 whole genome shotgun sequencing project.</title>
        <authorList>
            <person name="Setubal J.C."/>
            <person name="Bowns C."/>
            <person name="Boyle S."/>
            <person name="Crasta O.R."/>
            <person name="Czar M.J."/>
            <person name="Dharmanolla C."/>
            <person name="Gillespie J.J."/>
            <person name="Kenyon R.W."/>
            <person name="Lu J."/>
            <person name="Mane S."/>
            <person name="Mohapatra S."/>
            <person name="Nagrani S."/>
            <person name="Purkayastha A."/>
            <person name="Rajasimha H.K."/>
            <person name="Shallom J.M."/>
            <person name="Shallom S."/>
            <person name="Shukla M."/>
            <person name="Snyder E.E."/>
            <person name="Sobral B.W."/>
            <person name="Wattam A.R."/>
            <person name="Will R."/>
            <person name="Williams K."/>
            <person name="Yoo H."/>
            <person name="Bruce D."/>
            <person name="Detter C."/>
            <person name="Munk C."/>
            <person name="Brettin T.S."/>
        </authorList>
    </citation>
    <scope>NUCLEOTIDE SEQUENCE [LARGE SCALE GENOMIC DNA]</scope>
    <source>
        <strain>ATCC 23445 / NCTC 10510</strain>
    </source>
</reference>
<protein>
    <recommendedName>
        <fullName evidence="1">Deoxyguanosinetriphosphate triphosphohydrolase-like protein</fullName>
    </recommendedName>
</protein>
<keyword id="KW-0378">Hydrolase</keyword>
<gene>
    <name type="ordered locus">BSUIS_A0914</name>
</gene>
<proteinExistence type="inferred from homology"/>
<feature type="chain" id="PRO_1000085571" description="Deoxyguanosinetriphosphate triphosphohydrolase-like protein">
    <location>
        <begin position="1"/>
        <end position="402"/>
    </location>
</feature>
<feature type="domain" description="HD" evidence="2">
    <location>
        <begin position="73"/>
        <end position="217"/>
    </location>
</feature>
<sequence>MSLEGIGFGYRERAPYASNPAFSRGRLVPEAESPTRTPFQRDRDRIIHSTAFRRLKHKTQVFIAHEGDHYRTRLTHTIEVAQIARALARALRLDEDLAEAVALVHDFGHTPFGHTGEDALNERMKNFGGFDHNAQSLRIVTKLEHRYADFDGLNLSWETLEGLVKHNGPLLGPYAAHPDIPVPQPILDFNARYDLELSRFASLEAQCAAIADDIAYNAHDIDDGLRAGLLTLESLDEVPLAKRLLDIVRTRYPNLDPVRTGHELVRRQITIMVEDLIEEAQRRLASARPGTMEDVHNQPRALVGFSDAMRAEEKVLKRFLFKNLYFHESVVVRRHAADRIVQDLFDACFTDPSLMPDEWRLGCEALDKAALARRVADYLAGMTDNYAVREHRRLFDRTPDLA</sequence>
<name>DGTL1_BRUSI</name>
<evidence type="ECO:0000255" key="1">
    <source>
        <dbReference type="HAMAP-Rule" id="MF_01212"/>
    </source>
</evidence>
<evidence type="ECO:0000255" key="2">
    <source>
        <dbReference type="PROSITE-ProRule" id="PRU01175"/>
    </source>
</evidence>
<accession>B0CLK1</accession>
<organism>
    <name type="scientific">Brucella suis (strain ATCC 23445 / NCTC 10510)</name>
    <dbReference type="NCBI Taxonomy" id="470137"/>
    <lineage>
        <taxon>Bacteria</taxon>
        <taxon>Pseudomonadati</taxon>
        <taxon>Pseudomonadota</taxon>
        <taxon>Alphaproteobacteria</taxon>
        <taxon>Hyphomicrobiales</taxon>
        <taxon>Brucellaceae</taxon>
        <taxon>Brucella/Ochrobactrum group</taxon>
        <taxon>Brucella</taxon>
    </lineage>
</organism>
<comment type="similarity">
    <text evidence="1">Belongs to the dGTPase family. Type 2 subfamily.</text>
</comment>
<dbReference type="EMBL" id="CP000911">
    <property type="protein sequence ID" value="ABY37981.1"/>
    <property type="molecule type" value="Genomic_DNA"/>
</dbReference>
<dbReference type="RefSeq" id="WP_006072603.1">
    <property type="nucleotide sequence ID" value="NC_010169.1"/>
</dbReference>
<dbReference type="SMR" id="B0CLK1"/>
<dbReference type="KEGG" id="bmt:BSUIS_A0914"/>
<dbReference type="HOGENOM" id="CLU_028163_1_0_5"/>
<dbReference type="Proteomes" id="UP000008545">
    <property type="component" value="Chromosome I"/>
</dbReference>
<dbReference type="GO" id="GO:0008832">
    <property type="term" value="F:dGTPase activity"/>
    <property type="evidence" value="ECO:0007669"/>
    <property type="project" value="TreeGrafter"/>
</dbReference>
<dbReference type="GO" id="GO:0006203">
    <property type="term" value="P:dGTP catabolic process"/>
    <property type="evidence" value="ECO:0007669"/>
    <property type="project" value="TreeGrafter"/>
</dbReference>
<dbReference type="CDD" id="cd00077">
    <property type="entry name" value="HDc"/>
    <property type="match status" value="1"/>
</dbReference>
<dbReference type="Gene3D" id="1.10.3210.10">
    <property type="entry name" value="Hypothetical protein af1432"/>
    <property type="match status" value="1"/>
</dbReference>
<dbReference type="HAMAP" id="MF_01212">
    <property type="entry name" value="dGTPase_type2"/>
    <property type="match status" value="1"/>
</dbReference>
<dbReference type="InterPro" id="IPR006261">
    <property type="entry name" value="dGTPase"/>
</dbReference>
<dbReference type="InterPro" id="IPR050135">
    <property type="entry name" value="dGTPase-like"/>
</dbReference>
<dbReference type="InterPro" id="IPR023023">
    <property type="entry name" value="dNTPase_2"/>
</dbReference>
<dbReference type="InterPro" id="IPR003607">
    <property type="entry name" value="HD/PDEase_dom"/>
</dbReference>
<dbReference type="InterPro" id="IPR006674">
    <property type="entry name" value="HD_domain"/>
</dbReference>
<dbReference type="InterPro" id="IPR006675">
    <property type="entry name" value="HDIG_dom"/>
</dbReference>
<dbReference type="InterPro" id="IPR026875">
    <property type="entry name" value="PHydrolase_assoc_dom"/>
</dbReference>
<dbReference type="NCBIfam" id="TIGR01353">
    <property type="entry name" value="dGTP_triPase"/>
    <property type="match status" value="1"/>
</dbReference>
<dbReference type="NCBIfam" id="TIGR00277">
    <property type="entry name" value="HDIG"/>
    <property type="match status" value="1"/>
</dbReference>
<dbReference type="NCBIfam" id="NF002326">
    <property type="entry name" value="PRK01286.1-1"/>
    <property type="match status" value="1"/>
</dbReference>
<dbReference type="NCBIfam" id="NF002328">
    <property type="entry name" value="PRK01286.1-3"/>
    <property type="match status" value="1"/>
</dbReference>
<dbReference type="PANTHER" id="PTHR11373:SF43">
    <property type="entry name" value="DEOXYGUANOSINETRIPHOSPHATE TRIPHOSPHOHYDROLASE-LIKE PROTEIN"/>
    <property type="match status" value="1"/>
</dbReference>
<dbReference type="PANTHER" id="PTHR11373">
    <property type="entry name" value="DEOXYNUCLEOSIDE TRIPHOSPHATE TRIPHOSPHOHYDROLASE"/>
    <property type="match status" value="1"/>
</dbReference>
<dbReference type="Pfam" id="PF01966">
    <property type="entry name" value="HD"/>
    <property type="match status" value="1"/>
</dbReference>
<dbReference type="Pfam" id="PF13286">
    <property type="entry name" value="HD_assoc"/>
    <property type="match status" value="1"/>
</dbReference>
<dbReference type="SMART" id="SM00471">
    <property type="entry name" value="HDc"/>
    <property type="match status" value="1"/>
</dbReference>
<dbReference type="SUPFAM" id="SSF109604">
    <property type="entry name" value="HD-domain/PDEase-like"/>
    <property type="match status" value="1"/>
</dbReference>
<dbReference type="PROSITE" id="PS51831">
    <property type="entry name" value="HD"/>
    <property type="match status" value="1"/>
</dbReference>